<proteinExistence type="evidence at protein level"/>
<reference key="1">
    <citation type="journal article" date="1998" name="DNA Res.">
        <title>Structural analysis of Arabidopsis thaliana chromosome 5. VII. Sequence features of the regions of 1,013,767 bp covered by sixteen physically assigned P1 and TAC clones.</title>
        <authorList>
            <person name="Nakamura Y."/>
            <person name="Sato S."/>
            <person name="Asamizu E."/>
            <person name="Kaneko T."/>
            <person name="Kotani H."/>
            <person name="Miyajima N."/>
            <person name="Tabata S."/>
        </authorList>
    </citation>
    <scope>NUCLEOTIDE SEQUENCE [LARGE SCALE GENOMIC DNA]</scope>
    <source>
        <strain>cv. Columbia</strain>
    </source>
</reference>
<reference key="2">
    <citation type="journal article" date="2017" name="Plant J.">
        <title>Araport11: a complete reannotation of the Arabidopsis thaliana reference genome.</title>
        <authorList>
            <person name="Cheng C.Y."/>
            <person name="Krishnakumar V."/>
            <person name="Chan A.P."/>
            <person name="Thibaud-Nissen F."/>
            <person name="Schobel S."/>
            <person name="Town C.D."/>
        </authorList>
    </citation>
    <scope>GENOME REANNOTATION</scope>
    <source>
        <strain>cv. Columbia</strain>
    </source>
</reference>
<reference key="3">
    <citation type="journal article" date="2002" name="Science">
        <title>Functional annotation of a full-length Arabidopsis cDNA collection.</title>
        <authorList>
            <person name="Seki M."/>
            <person name="Narusaka M."/>
            <person name="Kamiya A."/>
            <person name="Ishida J."/>
            <person name="Satou M."/>
            <person name="Sakurai T."/>
            <person name="Nakajima M."/>
            <person name="Enju A."/>
            <person name="Akiyama K."/>
            <person name="Oono Y."/>
            <person name="Muramatsu M."/>
            <person name="Hayashizaki Y."/>
            <person name="Kawai J."/>
            <person name="Carninci P."/>
            <person name="Itoh M."/>
            <person name="Ishii Y."/>
            <person name="Arakawa T."/>
            <person name="Shibata K."/>
            <person name="Shinagawa A."/>
            <person name="Shinozaki K."/>
        </authorList>
    </citation>
    <scope>NUCLEOTIDE SEQUENCE [LARGE SCALE MRNA]</scope>
    <source>
        <strain>cv. Columbia</strain>
    </source>
</reference>
<reference key="4">
    <citation type="journal article" date="2005" name="PLoS Comput. Biol.">
        <title>Inferring hypotheses on functional relationships of genes: Analysis of the Arabidopsis thaliana subtilase gene family.</title>
        <authorList>
            <person name="Rautengarten C."/>
            <person name="Steinhauser D."/>
            <person name="Bussis D."/>
            <person name="Stintzi A."/>
            <person name="Schaller A."/>
            <person name="Kopka J."/>
            <person name="Altmann T."/>
        </authorList>
    </citation>
    <scope>GENE FAMILY</scope>
    <scope>NOMENCLATURE</scope>
</reference>
<reference key="5">
    <citation type="journal article" date="2009" name="Planta">
        <title>Overexpression of an Arabidopsis gene encoding a subtilase (AtSBT5.4) produces a clavata-like phenotype.</title>
        <authorList>
            <person name="Liu J.X."/>
            <person name="Srivastava R."/>
            <person name="Howell S."/>
        </authorList>
    </citation>
    <scope>FUNCTION</scope>
    <scope>SUBCELLULAR LOCATION</scope>
    <scope>TISSUE SPECIFICITY</scope>
    <scope>DISRUPTION PHENOTYPE</scope>
    <scope>MUTAGENESIS OF SER-567</scope>
</reference>
<evidence type="ECO:0000250" key="1"/>
<evidence type="ECO:0000255" key="2"/>
<evidence type="ECO:0000255" key="3">
    <source>
        <dbReference type="PROSITE-ProRule" id="PRU01240"/>
    </source>
</evidence>
<evidence type="ECO:0000269" key="4">
    <source>
    </source>
</evidence>
<evidence type="ECO:0000303" key="5">
    <source>
    </source>
</evidence>
<evidence type="ECO:0000305" key="6"/>
<evidence type="ECO:0000305" key="7">
    <source>
    </source>
</evidence>
<feature type="signal peptide" evidence="2">
    <location>
        <begin position="1"/>
        <end position="35"/>
    </location>
</feature>
<feature type="chain" id="PRO_0000429357" description="Subtilisin-like protease SBT5.4">
    <location>
        <begin position="36"/>
        <end position="778"/>
    </location>
</feature>
<feature type="domain" description="Inhibitor I9" evidence="2">
    <location>
        <begin position="41"/>
        <end position="126"/>
    </location>
</feature>
<feature type="domain" description="Peptidase S8" evidence="3">
    <location>
        <begin position="130"/>
        <end position="634"/>
    </location>
</feature>
<feature type="domain" description="PA">
    <location>
        <begin position="401"/>
        <end position="486"/>
    </location>
</feature>
<feature type="active site" description="Charge relay system" evidence="3">
    <location>
        <position position="163"/>
    </location>
</feature>
<feature type="active site" description="Charge relay system" evidence="3">
    <location>
        <position position="230"/>
    </location>
</feature>
<feature type="active site" description="Charge relay system" evidence="3">
    <location>
        <position position="567"/>
    </location>
</feature>
<feature type="glycosylation site" description="N-linked (GlcNAc...) asparagine" evidence="2">
    <location>
        <position position="218"/>
    </location>
</feature>
<feature type="glycosylation site" description="N-linked (GlcNAc...) asparagine" evidence="2">
    <location>
        <position position="253"/>
    </location>
</feature>
<feature type="glycosylation site" description="N-linked (GlcNAc...) asparagine" evidence="2">
    <location>
        <position position="404"/>
    </location>
</feature>
<feature type="glycosylation site" description="N-linked (GlcNAc...) asparagine" evidence="2">
    <location>
        <position position="657"/>
    </location>
</feature>
<feature type="glycosylation site" description="N-linked (GlcNAc...) asparagine" evidence="2">
    <location>
        <position position="690"/>
    </location>
</feature>
<feature type="glycosylation site" description="N-linked (GlcNAc...) asparagine" evidence="2">
    <location>
        <position position="732"/>
    </location>
</feature>
<feature type="mutagenesis site" description="Loss of activity." evidence="4">
    <original>S</original>
    <variation>A</variation>
    <location>
        <position position="567"/>
    </location>
</feature>
<gene>
    <name evidence="5" type="primary">SBT5.4</name>
    <name type="ordered locus">At5g59810</name>
    <name type="ORF">MMN10.6</name>
</gene>
<sequence length="778" mass="83456">MSMTRRYSSTQYSNKMSLQSLSSLLLLVTLFFSPAFALKKSYIVYLGSHAHLPQISSAHLDGVAHSHRTFLASFVGSHENAKEAIFYSYKRHINGFAAILDENEAAEIAKHPDVVSVFPNKGRKLHTTHSWNFMLLAKNGVVHKSSLWNKAGYGEDTIIANLDTGVWPESKSFSDEGYGAVPARWKGRCHKDVPCNRKLIGARYFNKGYLAYTGLPSNASYETCRDHDGHGSHTLSTAAGNFVPGANVFGIGNGTASGGSPKARVAAYKVCWPPVDGAECFDADILAAIEAAIEDGVDVLSASVGGDAGDYMSDGIAIGSFHAVKNGVTVVCSAGNSGPKSGTVSNVAPWVITVGASSMDREFQAFVELKNGQSFKGTSLSKPLPEEKMYSLISAADANVANGNVTDALLCKKGSLDPKKVKGKILVCLRGDNARVDKGMQAAAAGAAGMVLCNDKASGNEIISDAHVLPASQIDYKDGETLFSYLSSTKDPKGYIKAPTATLNTKPAPFMASFSSRGPNTITPGILKPDITAPGVNIIAAFTEATGPTDLDSDNRRTPFNTESGTSMSCPHISGVVGLLKTLHPHWSPAAIRSAIMTTSRTRNNRRKPMVDESFKKANPFSYGSGHVQPNKAAHPGLVYDLTTGDYLDFLCAVGYNNTVVQLFAEDPQYTCRQGANLLDFNYPSITVPNLTGSITVTRKLKNVGPPATYNARFREPLGVRVSVEPKQLTFNKTGEVKIFQMTLRPLPVTPSGYVFGELTWTDSHHYVRSPIVVQLSS</sequence>
<accession>F4JXC5</accession>
<accession>Q8GXU1</accession>
<accession>Q9FJF3</accession>
<keyword id="KW-1003">Cell membrane</keyword>
<keyword id="KW-0256">Endoplasmic reticulum</keyword>
<keyword id="KW-0325">Glycoprotein</keyword>
<keyword id="KW-0341">Growth regulation</keyword>
<keyword id="KW-0378">Hydrolase</keyword>
<keyword id="KW-0472">Membrane</keyword>
<keyword id="KW-0645">Protease</keyword>
<keyword id="KW-1185">Reference proteome</keyword>
<keyword id="KW-0720">Serine protease</keyword>
<keyword id="KW-0732">Signal</keyword>
<protein>
    <recommendedName>
        <fullName evidence="5">Subtilisin-like protease SBT5.4</fullName>
        <ecNumber evidence="6">3.4.21.-</ecNumber>
    </recommendedName>
    <alternativeName>
        <fullName evidence="5">Subtilase subfamily 5 member 4</fullName>
        <shortName evidence="5">AtSBT5.4</shortName>
    </alternativeName>
</protein>
<name>SBT54_ARATH</name>
<organism>
    <name type="scientific">Arabidopsis thaliana</name>
    <name type="common">Mouse-ear cress</name>
    <dbReference type="NCBI Taxonomy" id="3702"/>
    <lineage>
        <taxon>Eukaryota</taxon>
        <taxon>Viridiplantae</taxon>
        <taxon>Streptophyta</taxon>
        <taxon>Embryophyta</taxon>
        <taxon>Tracheophyta</taxon>
        <taxon>Spermatophyta</taxon>
        <taxon>Magnoliopsida</taxon>
        <taxon>eudicotyledons</taxon>
        <taxon>Gunneridae</taxon>
        <taxon>Pentapetalae</taxon>
        <taxon>rosids</taxon>
        <taxon>malvids</taxon>
        <taxon>Brassicales</taxon>
        <taxon>Brassicaceae</taxon>
        <taxon>Camelineae</taxon>
        <taxon>Arabidopsis</taxon>
    </lineage>
</organism>
<comment type="function">
    <text evidence="1 4">Serine protease. Has a substrate preference for the hydrophobic residues Phe and Ala and the basic residue Asp in the P1 position, and for Asp, Leu or Ala in the P1' position (By similarity). Interferes with CLAVATA 3 (CLV3) signaling, but does not cleave CLV3.</text>
</comment>
<comment type="subcellular location">
    <subcellularLocation>
        <location evidence="7">Endoplasmic reticulum</location>
    </subcellularLocation>
    <subcellularLocation>
        <location evidence="7">Cell membrane</location>
    </subcellularLocation>
</comment>
<comment type="tissue specificity">
    <text evidence="4">Expressed in the vasculature of roots and leaves, stomata, sepals, stigma, anthers and siliques.</text>
</comment>
<comment type="disruption phenotype">
    <text evidence="4">No visible phenotype under normal growth conditions.</text>
</comment>
<comment type="miscellaneous">
    <text evidence="7">Plants over-expressing SBT5.4 show a clavata-like phenotype with fasciated inflorescence stems and compounded terminal buds. This phenotype is abolished by mutating Ser-567 to Ala which completely disrupts the catalytic center of the protease (PubMed:19588163).</text>
</comment>
<comment type="similarity">
    <text evidence="3">Belongs to the peptidase S8 family.</text>
</comment>
<comment type="sequence caution" evidence="6">
    <conflict type="erroneous gene model prediction">
        <sequence resource="EMBL-CDS" id="BAB08348"/>
    </conflict>
</comment>
<comment type="sequence caution" evidence="6">
    <conflict type="erroneous termination">
        <sequence resource="EMBL-CDS" id="BAC42673"/>
    </conflict>
    <text>Truncated C-terminus.</text>
</comment>
<dbReference type="EC" id="3.4.21.-" evidence="6"/>
<dbReference type="EMBL" id="AB015475">
    <property type="protein sequence ID" value="BAB08348.1"/>
    <property type="status" value="ALT_SEQ"/>
    <property type="molecule type" value="Genomic_DNA"/>
</dbReference>
<dbReference type="EMBL" id="CP002688">
    <property type="protein sequence ID" value="AED97236.1"/>
    <property type="molecule type" value="Genomic_DNA"/>
</dbReference>
<dbReference type="EMBL" id="AK118042">
    <property type="protein sequence ID" value="BAC42673.1"/>
    <property type="status" value="ALT_SEQ"/>
    <property type="molecule type" value="mRNA"/>
</dbReference>
<dbReference type="RefSeq" id="NP_200789.2">
    <property type="nucleotide sequence ID" value="NM_125373.3"/>
</dbReference>
<dbReference type="SMR" id="F4JXC5"/>
<dbReference type="FunCoup" id="F4JXC5">
    <property type="interactions" value="8"/>
</dbReference>
<dbReference type="STRING" id="3702.F4JXC5"/>
<dbReference type="MEROPS" id="S08.A26"/>
<dbReference type="GlyCosmos" id="F4JXC5">
    <property type="glycosylation" value="6 sites, No reported glycans"/>
</dbReference>
<dbReference type="GlyGen" id="F4JXC5">
    <property type="glycosylation" value="8 sites"/>
</dbReference>
<dbReference type="iPTMnet" id="F4JXC5"/>
<dbReference type="PaxDb" id="3702-AT5G59810.1"/>
<dbReference type="ProteomicsDB" id="232793"/>
<dbReference type="EnsemblPlants" id="AT5G59810.1">
    <property type="protein sequence ID" value="AT5G59810.1"/>
    <property type="gene ID" value="AT5G59810"/>
</dbReference>
<dbReference type="GeneID" id="836102"/>
<dbReference type="Gramene" id="AT5G59810.1">
    <property type="protein sequence ID" value="AT5G59810.1"/>
    <property type="gene ID" value="AT5G59810"/>
</dbReference>
<dbReference type="KEGG" id="ath:AT5G59810"/>
<dbReference type="Araport" id="AT5G59810"/>
<dbReference type="TAIR" id="AT5G59810">
    <property type="gene designation" value="SBT5.4"/>
</dbReference>
<dbReference type="eggNOG" id="ENOG502RKXZ">
    <property type="taxonomic scope" value="Eukaryota"/>
</dbReference>
<dbReference type="HOGENOM" id="CLU_000625_4_6_1"/>
<dbReference type="InParanoid" id="F4JXC5"/>
<dbReference type="OMA" id="VHKSSLW"/>
<dbReference type="PRO" id="PR:F4JXC5"/>
<dbReference type="Proteomes" id="UP000006548">
    <property type="component" value="Chromosome 5"/>
</dbReference>
<dbReference type="ExpressionAtlas" id="F4JXC5">
    <property type="expression patterns" value="baseline and differential"/>
</dbReference>
<dbReference type="GO" id="GO:0005783">
    <property type="term" value="C:endoplasmic reticulum"/>
    <property type="evidence" value="ECO:0007669"/>
    <property type="project" value="UniProtKB-SubCell"/>
</dbReference>
<dbReference type="GO" id="GO:0005886">
    <property type="term" value="C:plasma membrane"/>
    <property type="evidence" value="ECO:0007669"/>
    <property type="project" value="UniProtKB-SubCell"/>
</dbReference>
<dbReference type="GO" id="GO:0004252">
    <property type="term" value="F:serine-type endopeptidase activity"/>
    <property type="evidence" value="ECO:0000314"/>
    <property type="project" value="UniProtKB"/>
</dbReference>
<dbReference type="GO" id="GO:0010074">
    <property type="term" value="P:maintenance of meristem identity"/>
    <property type="evidence" value="ECO:0000316"/>
    <property type="project" value="UniProtKB"/>
</dbReference>
<dbReference type="GO" id="GO:0006508">
    <property type="term" value="P:proteolysis"/>
    <property type="evidence" value="ECO:0007669"/>
    <property type="project" value="UniProtKB-KW"/>
</dbReference>
<dbReference type="CDD" id="cd02120">
    <property type="entry name" value="PA_subtilisin_like"/>
    <property type="match status" value="1"/>
</dbReference>
<dbReference type="CDD" id="cd04852">
    <property type="entry name" value="Peptidases_S8_3"/>
    <property type="match status" value="1"/>
</dbReference>
<dbReference type="FunFam" id="2.60.40.2310:FF:000001">
    <property type="entry name" value="Subtilisin-like protease SBT1.5"/>
    <property type="match status" value="1"/>
</dbReference>
<dbReference type="FunFam" id="3.40.50.200:FF:000006">
    <property type="entry name" value="Subtilisin-like protease SBT1.5"/>
    <property type="match status" value="1"/>
</dbReference>
<dbReference type="FunFam" id="3.50.30.30:FF:000005">
    <property type="entry name" value="subtilisin-like protease SBT1.5"/>
    <property type="match status" value="1"/>
</dbReference>
<dbReference type="FunFam" id="3.30.70.80:FF:000002">
    <property type="entry name" value="Subtilisin-like protease SBT5.3"/>
    <property type="match status" value="1"/>
</dbReference>
<dbReference type="Gene3D" id="2.60.40.2310">
    <property type="match status" value="1"/>
</dbReference>
<dbReference type="Gene3D" id="3.50.30.30">
    <property type="match status" value="1"/>
</dbReference>
<dbReference type="Gene3D" id="3.30.70.80">
    <property type="entry name" value="Peptidase S8 propeptide/proteinase inhibitor I9"/>
    <property type="match status" value="1"/>
</dbReference>
<dbReference type="Gene3D" id="3.40.50.200">
    <property type="entry name" value="Peptidase S8/S53 domain"/>
    <property type="match status" value="1"/>
</dbReference>
<dbReference type="InterPro" id="IPR046450">
    <property type="entry name" value="PA_dom_sf"/>
</dbReference>
<dbReference type="InterPro" id="IPR003137">
    <property type="entry name" value="PA_domain"/>
</dbReference>
<dbReference type="InterPro" id="IPR000209">
    <property type="entry name" value="Peptidase_S8/S53_dom"/>
</dbReference>
<dbReference type="InterPro" id="IPR036852">
    <property type="entry name" value="Peptidase_S8/S53_dom_sf"/>
</dbReference>
<dbReference type="InterPro" id="IPR023828">
    <property type="entry name" value="Peptidase_S8_Ser-AS"/>
</dbReference>
<dbReference type="InterPro" id="IPR015500">
    <property type="entry name" value="Peptidase_S8_subtilisin-rel"/>
</dbReference>
<dbReference type="InterPro" id="IPR034197">
    <property type="entry name" value="Peptidases_S8_3"/>
</dbReference>
<dbReference type="InterPro" id="IPR010259">
    <property type="entry name" value="S8pro/Inhibitor_I9"/>
</dbReference>
<dbReference type="InterPro" id="IPR037045">
    <property type="entry name" value="S8pro/Inhibitor_I9_sf"/>
</dbReference>
<dbReference type="InterPro" id="IPR045051">
    <property type="entry name" value="SBT"/>
</dbReference>
<dbReference type="InterPro" id="IPR041469">
    <property type="entry name" value="Subtilisin-like_FN3"/>
</dbReference>
<dbReference type="PANTHER" id="PTHR10795">
    <property type="entry name" value="PROPROTEIN CONVERTASE SUBTILISIN/KEXIN"/>
    <property type="match status" value="1"/>
</dbReference>
<dbReference type="Pfam" id="PF17766">
    <property type="entry name" value="fn3_6"/>
    <property type="match status" value="1"/>
</dbReference>
<dbReference type="Pfam" id="PF05922">
    <property type="entry name" value="Inhibitor_I9"/>
    <property type="match status" value="1"/>
</dbReference>
<dbReference type="Pfam" id="PF02225">
    <property type="entry name" value="PA"/>
    <property type="match status" value="1"/>
</dbReference>
<dbReference type="Pfam" id="PF00082">
    <property type="entry name" value="Peptidase_S8"/>
    <property type="match status" value="1"/>
</dbReference>
<dbReference type="PRINTS" id="PR00723">
    <property type="entry name" value="SUBTILISIN"/>
</dbReference>
<dbReference type="SUPFAM" id="SSF52025">
    <property type="entry name" value="PA domain"/>
    <property type="match status" value="1"/>
</dbReference>
<dbReference type="SUPFAM" id="SSF54897">
    <property type="entry name" value="Protease propeptides/inhibitors"/>
    <property type="match status" value="1"/>
</dbReference>
<dbReference type="SUPFAM" id="SSF52743">
    <property type="entry name" value="Subtilisin-like"/>
    <property type="match status" value="1"/>
</dbReference>
<dbReference type="PROSITE" id="PS51892">
    <property type="entry name" value="SUBTILASE"/>
    <property type="match status" value="1"/>
</dbReference>
<dbReference type="PROSITE" id="PS00138">
    <property type="entry name" value="SUBTILASE_SER"/>
    <property type="match status" value="1"/>
</dbReference>